<protein>
    <recommendedName>
        <fullName evidence="1">Sulfate/thiosulfate import ATP-binding protein CysA</fullName>
        <ecNumber evidence="1">7.3.2.3</ecNumber>
    </recommendedName>
    <alternativeName>
        <fullName evidence="1">Sulfate-transporting ATPase</fullName>
    </alternativeName>
</protein>
<accession>Q98K23</accession>
<organism>
    <name type="scientific">Mesorhizobium japonicum (strain LMG 29417 / CECT 9101 / MAFF 303099)</name>
    <name type="common">Mesorhizobium loti (strain MAFF 303099)</name>
    <dbReference type="NCBI Taxonomy" id="266835"/>
    <lineage>
        <taxon>Bacteria</taxon>
        <taxon>Pseudomonadati</taxon>
        <taxon>Pseudomonadota</taxon>
        <taxon>Alphaproteobacteria</taxon>
        <taxon>Hyphomicrobiales</taxon>
        <taxon>Phyllobacteriaceae</taxon>
        <taxon>Mesorhizobium</taxon>
    </lineage>
</organism>
<sequence length="346" mass="38405">MEVRVANVRKEFERFPALHDVSLDIKSGELIALLGPSGSGKTTLLRLIAGLERPTRGKIFFGDEDASQKSIQERNVGFVFQHYALFRHMTVADNIGFGLKVRHGSSRPPAQEIRRRASELLDLVQLSGLEKRYPAQLSGGQRQRVALARAMAIEPKVLLLDEPFGALDAQVRRELRRWLREIHDRTGHTTVFVTHDQEEALELADRVVVMSQGRIEQVGTADDIYDTPNSPFVYGFIGESSSLPVKVENGEIWLADRPIGLSAPHAPEGEATLYFRPHDVELLDGCSGCIAGTVAASRRVAGTRRVELEIGGERQRVEIELPVGHPAAQKSRVAFRPGRWKLFPAA</sequence>
<feature type="chain" id="PRO_0000092286" description="Sulfate/thiosulfate import ATP-binding protein CysA">
    <location>
        <begin position="1"/>
        <end position="346"/>
    </location>
</feature>
<feature type="domain" description="ABC transporter" evidence="1">
    <location>
        <begin position="3"/>
        <end position="237"/>
    </location>
</feature>
<feature type="binding site" evidence="1">
    <location>
        <begin position="35"/>
        <end position="42"/>
    </location>
    <ligand>
        <name>ATP</name>
        <dbReference type="ChEBI" id="CHEBI:30616"/>
    </ligand>
</feature>
<evidence type="ECO:0000255" key="1">
    <source>
        <dbReference type="HAMAP-Rule" id="MF_01701"/>
    </source>
</evidence>
<gene>
    <name evidence="1" type="primary">cysA</name>
    <name type="ordered locus">mlr1669</name>
</gene>
<name>CYSA_RHILO</name>
<dbReference type="EC" id="7.3.2.3" evidence="1"/>
<dbReference type="EMBL" id="BA000012">
    <property type="protein sequence ID" value="BAB48991.1"/>
    <property type="molecule type" value="Genomic_DNA"/>
</dbReference>
<dbReference type="RefSeq" id="WP_010910344.1">
    <property type="nucleotide sequence ID" value="NC_002678.2"/>
</dbReference>
<dbReference type="SMR" id="Q98K23"/>
<dbReference type="KEGG" id="mlo:mlr1669"/>
<dbReference type="eggNOG" id="COG1118">
    <property type="taxonomic scope" value="Bacteria"/>
</dbReference>
<dbReference type="HOGENOM" id="CLU_000604_1_1_5"/>
<dbReference type="Proteomes" id="UP000000552">
    <property type="component" value="Chromosome"/>
</dbReference>
<dbReference type="GO" id="GO:0043190">
    <property type="term" value="C:ATP-binding cassette (ABC) transporter complex"/>
    <property type="evidence" value="ECO:0007669"/>
    <property type="project" value="InterPro"/>
</dbReference>
<dbReference type="GO" id="GO:0015419">
    <property type="term" value="F:ABC-type sulfate transporter activity"/>
    <property type="evidence" value="ECO:0007669"/>
    <property type="project" value="InterPro"/>
</dbReference>
<dbReference type="GO" id="GO:0102025">
    <property type="term" value="F:ABC-type thiosulfate transporter activity"/>
    <property type="evidence" value="ECO:0007669"/>
    <property type="project" value="RHEA"/>
</dbReference>
<dbReference type="GO" id="GO:0005524">
    <property type="term" value="F:ATP binding"/>
    <property type="evidence" value="ECO:0007669"/>
    <property type="project" value="UniProtKB-KW"/>
</dbReference>
<dbReference type="GO" id="GO:0016887">
    <property type="term" value="F:ATP hydrolysis activity"/>
    <property type="evidence" value="ECO:0007669"/>
    <property type="project" value="InterPro"/>
</dbReference>
<dbReference type="CDD" id="cd03296">
    <property type="entry name" value="ABC_CysA_sulfate_importer"/>
    <property type="match status" value="1"/>
</dbReference>
<dbReference type="FunFam" id="3.40.50.300:FF:000425">
    <property type="entry name" value="Probable ABC transporter, ATP-binding subunit"/>
    <property type="match status" value="1"/>
</dbReference>
<dbReference type="Gene3D" id="3.40.50.300">
    <property type="entry name" value="P-loop containing nucleotide triphosphate hydrolases"/>
    <property type="match status" value="1"/>
</dbReference>
<dbReference type="InterPro" id="IPR003593">
    <property type="entry name" value="AAA+_ATPase"/>
</dbReference>
<dbReference type="InterPro" id="IPR050093">
    <property type="entry name" value="ABC_SmlMolc_Importer"/>
</dbReference>
<dbReference type="InterPro" id="IPR003439">
    <property type="entry name" value="ABC_transporter-like_ATP-bd"/>
</dbReference>
<dbReference type="InterPro" id="IPR017871">
    <property type="entry name" value="ABC_transporter-like_CS"/>
</dbReference>
<dbReference type="InterPro" id="IPR008995">
    <property type="entry name" value="Mo/tungstate-bd_C_term_dom"/>
</dbReference>
<dbReference type="InterPro" id="IPR027417">
    <property type="entry name" value="P-loop_NTPase"/>
</dbReference>
<dbReference type="InterPro" id="IPR005666">
    <property type="entry name" value="Sulph_transpt1"/>
</dbReference>
<dbReference type="InterPro" id="IPR024765">
    <property type="entry name" value="TOBE-like"/>
</dbReference>
<dbReference type="NCBIfam" id="TIGR00968">
    <property type="entry name" value="3a0106s01"/>
    <property type="match status" value="1"/>
</dbReference>
<dbReference type="PANTHER" id="PTHR42781">
    <property type="entry name" value="SPERMIDINE/PUTRESCINE IMPORT ATP-BINDING PROTEIN POTA"/>
    <property type="match status" value="1"/>
</dbReference>
<dbReference type="PANTHER" id="PTHR42781:SF4">
    <property type="entry name" value="SPERMIDINE_PUTRESCINE IMPORT ATP-BINDING PROTEIN POTA"/>
    <property type="match status" value="1"/>
</dbReference>
<dbReference type="Pfam" id="PF00005">
    <property type="entry name" value="ABC_tran"/>
    <property type="match status" value="1"/>
</dbReference>
<dbReference type="Pfam" id="PF12857">
    <property type="entry name" value="TOBE_3"/>
    <property type="match status" value="1"/>
</dbReference>
<dbReference type="SMART" id="SM00382">
    <property type="entry name" value="AAA"/>
    <property type="match status" value="1"/>
</dbReference>
<dbReference type="SUPFAM" id="SSF50331">
    <property type="entry name" value="MOP-like"/>
    <property type="match status" value="1"/>
</dbReference>
<dbReference type="SUPFAM" id="SSF52540">
    <property type="entry name" value="P-loop containing nucleoside triphosphate hydrolases"/>
    <property type="match status" value="1"/>
</dbReference>
<dbReference type="PROSITE" id="PS00211">
    <property type="entry name" value="ABC_TRANSPORTER_1"/>
    <property type="match status" value="1"/>
</dbReference>
<dbReference type="PROSITE" id="PS50893">
    <property type="entry name" value="ABC_TRANSPORTER_2"/>
    <property type="match status" value="1"/>
</dbReference>
<dbReference type="PROSITE" id="PS51237">
    <property type="entry name" value="CYSA"/>
    <property type="match status" value="1"/>
</dbReference>
<keyword id="KW-0067">ATP-binding</keyword>
<keyword id="KW-0997">Cell inner membrane</keyword>
<keyword id="KW-1003">Cell membrane</keyword>
<keyword id="KW-0472">Membrane</keyword>
<keyword id="KW-0547">Nucleotide-binding</keyword>
<keyword id="KW-0764">Sulfate transport</keyword>
<keyword id="KW-1278">Translocase</keyword>
<keyword id="KW-0813">Transport</keyword>
<proteinExistence type="inferred from homology"/>
<comment type="function">
    <text evidence="1">Part of the ABC transporter complex CysAWTP involved in sulfate/thiosulfate import. Responsible for energy coupling to the transport system.</text>
</comment>
<comment type="catalytic activity">
    <reaction evidence="1">
        <text>sulfate(out) + ATP + H2O = sulfate(in) + ADP + phosphate + H(+)</text>
        <dbReference type="Rhea" id="RHEA:10192"/>
        <dbReference type="ChEBI" id="CHEBI:15377"/>
        <dbReference type="ChEBI" id="CHEBI:15378"/>
        <dbReference type="ChEBI" id="CHEBI:16189"/>
        <dbReference type="ChEBI" id="CHEBI:30616"/>
        <dbReference type="ChEBI" id="CHEBI:43474"/>
        <dbReference type="ChEBI" id="CHEBI:456216"/>
        <dbReference type="EC" id="7.3.2.3"/>
    </reaction>
</comment>
<comment type="catalytic activity">
    <reaction evidence="1">
        <text>thiosulfate(out) + ATP + H2O = thiosulfate(in) + ADP + phosphate + H(+)</text>
        <dbReference type="Rhea" id="RHEA:29871"/>
        <dbReference type="ChEBI" id="CHEBI:15377"/>
        <dbReference type="ChEBI" id="CHEBI:15378"/>
        <dbReference type="ChEBI" id="CHEBI:30616"/>
        <dbReference type="ChEBI" id="CHEBI:33542"/>
        <dbReference type="ChEBI" id="CHEBI:43474"/>
        <dbReference type="ChEBI" id="CHEBI:456216"/>
        <dbReference type="EC" id="7.3.2.3"/>
    </reaction>
</comment>
<comment type="subunit">
    <text evidence="1">The complex is composed of two ATP-binding proteins (CysA), two transmembrane proteins (CysT and CysW) and a solute-binding protein (CysP).</text>
</comment>
<comment type="subcellular location">
    <subcellularLocation>
        <location evidence="1">Cell inner membrane</location>
        <topology evidence="1">Peripheral membrane protein</topology>
    </subcellularLocation>
</comment>
<comment type="similarity">
    <text evidence="1">Belongs to the ABC transporter superfamily. Sulfate/tungstate importer (TC 3.A.1.6) family.</text>
</comment>
<reference key="1">
    <citation type="journal article" date="2000" name="DNA Res.">
        <title>Complete genome structure of the nitrogen-fixing symbiotic bacterium Mesorhizobium loti.</title>
        <authorList>
            <person name="Kaneko T."/>
            <person name="Nakamura Y."/>
            <person name="Sato S."/>
            <person name="Asamizu E."/>
            <person name="Kato T."/>
            <person name="Sasamoto S."/>
            <person name="Watanabe A."/>
            <person name="Idesawa K."/>
            <person name="Ishikawa A."/>
            <person name="Kawashima K."/>
            <person name="Kimura T."/>
            <person name="Kishida Y."/>
            <person name="Kiyokawa C."/>
            <person name="Kohara M."/>
            <person name="Matsumoto M."/>
            <person name="Matsuno A."/>
            <person name="Mochizuki Y."/>
            <person name="Nakayama S."/>
            <person name="Nakazaki N."/>
            <person name="Shimpo S."/>
            <person name="Sugimoto M."/>
            <person name="Takeuchi C."/>
            <person name="Yamada M."/>
            <person name="Tabata S."/>
        </authorList>
    </citation>
    <scope>NUCLEOTIDE SEQUENCE [LARGE SCALE GENOMIC DNA]</scope>
    <source>
        <strain>LMG 29417 / CECT 9101 / MAFF 303099</strain>
    </source>
</reference>